<accession>A5GP52</accession>
<proteinExistence type="inferred from homology"/>
<sequence>MSPGLDLEQSFSQTLEGFGLSDQAARLIWLPLPMLLVLVAAVVGVLVTVWLERKISAAVQQRIGPEYAGALGVLQPLADGLKLLVKEDIIPARADGLLFTLGPVLVVVPVILSWLIVPFGQNLLISNVGVGIFLWISLSSVQPIGLLMSGYASNNKYSLLGGLRAAAQSISYEIPLALAVLAVVMMSNSLSTVDIVSQQTGAGILSWNIWRQPVGFLIFWICALAECERLPFDLPEAEEELVAGYQTEYAGMKFALFYLGSYINLVLSALLVSVLYLGGWGFPVPVEWLAGWLGQSVDAPLVQVITGATGIVMTVLKAYLLVFIAILLRWTTPRVRIDQLLDLGWKFLLPLALVNLLVTAALKLAFPVAFGG</sequence>
<organism>
    <name type="scientific">Synechococcus sp. (strain WH7803)</name>
    <dbReference type="NCBI Taxonomy" id="32051"/>
    <lineage>
        <taxon>Bacteria</taxon>
        <taxon>Bacillati</taxon>
        <taxon>Cyanobacteriota</taxon>
        <taxon>Cyanophyceae</taxon>
        <taxon>Synechococcales</taxon>
        <taxon>Synechococcaceae</taxon>
        <taxon>Synechococcus</taxon>
    </lineage>
</organism>
<reference key="1">
    <citation type="submission" date="2006-05" db="EMBL/GenBank/DDBJ databases">
        <authorList>
            <consortium name="Genoscope"/>
        </authorList>
    </citation>
    <scope>NUCLEOTIDE SEQUENCE [LARGE SCALE GENOMIC DNA]</scope>
    <source>
        <strain>WH7803</strain>
    </source>
</reference>
<evidence type="ECO:0000255" key="1">
    <source>
        <dbReference type="HAMAP-Rule" id="MF_01350"/>
    </source>
</evidence>
<evidence type="ECO:0000305" key="2"/>
<comment type="function">
    <text evidence="1">NDH-1 shuttles electrons from an unknown electron donor, via FMN and iron-sulfur (Fe-S) centers, to quinones in the respiratory and/or the photosynthetic chain. The immediate electron acceptor for the enzyme in this species is believed to be plastoquinone. Couples the redox reaction to proton translocation, and thus conserves the redox energy in a proton gradient.</text>
</comment>
<comment type="catalytic activity">
    <reaction evidence="1">
        <text>a plastoquinone + NADH + (n+1) H(+)(in) = a plastoquinol + NAD(+) + n H(+)(out)</text>
        <dbReference type="Rhea" id="RHEA:42608"/>
        <dbReference type="Rhea" id="RHEA-COMP:9561"/>
        <dbReference type="Rhea" id="RHEA-COMP:9562"/>
        <dbReference type="ChEBI" id="CHEBI:15378"/>
        <dbReference type="ChEBI" id="CHEBI:17757"/>
        <dbReference type="ChEBI" id="CHEBI:57540"/>
        <dbReference type="ChEBI" id="CHEBI:57945"/>
        <dbReference type="ChEBI" id="CHEBI:62192"/>
    </reaction>
</comment>
<comment type="catalytic activity">
    <reaction evidence="1">
        <text>a plastoquinone + NADPH + (n+1) H(+)(in) = a plastoquinol + NADP(+) + n H(+)(out)</text>
        <dbReference type="Rhea" id="RHEA:42612"/>
        <dbReference type="Rhea" id="RHEA-COMP:9561"/>
        <dbReference type="Rhea" id="RHEA-COMP:9562"/>
        <dbReference type="ChEBI" id="CHEBI:15378"/>
        <dbReference type="ChEBI" id="CHEBI:17757"/>
        <dbReference type="ChEBI" id="CHEBI:57783"/>
        <dbReference type="ChEBI" id="CHEBI:58349"/>
        <dbReference type="ChEBI" id="CHEBI:62192"/>
    </reaction>
</comment>
<comment type="subunit">
    <text evidence="1">NDH-1 is composed of at least 11 different subunits.</text>
</comment>
<comment type="subcellular location">
    <subcellularLocation>
        <location evidence="1">Cellular thylakoid membrane</location>
        <topology evidence="1">Multi-pass membrane protein</topology>
    </subcellularLocation>
</comment>
<comment type="similarity">
    <text evidence="1">Belongs to the complex I subunit 1 family.</text>
</comment>
<comment type="sequence caution" evidence="2">
    <conflict type="erroneous initiation">
        <sequence resource="EMBL-CDS" id="CAK24717"/>
    </conflict>
</comment>
<feature type="chain" id="PRO_0000298854" description="NAD(P)H-quinone oxidoreductase subunit 1">
    <location>
        <begin position="1"/>
        <end position="372"/>
    </location>
</feature>
<feature type="transmembrane region" description="Helical" evidence="1">
    <location>
        <begin position="27"/>
        <end position="47"/>
    </location>
</feature>
<feature type="transmembrane region" description="Helical" evidence="1">
    <location>
        <begin position="97"/>
        <end position="117"/>
    </location>
</feature>
<feature type="transmembrane region" description="Helical" evidence="1">
    <location>
        <begin position="128"/>
        <end position="148"/>
    </location>
</feature>
<feature type="transmembrane region" description="Helical" evidence="1">
    <location>
        <begin position="166"/>
        <end position="186"/>
    </location>
</feature>
<feature type="transmembrane region" description="Helical" evidence="1">
    <location>
        <begin position="204"/>
        <end position="224"/>
    </location>
</feature>
<feature type="transmembrane region" description="Helical" evidence="1">
    <location>
        <begin position="266"/>
        <end position="286"/>
    </location>
</feature>
<feature type="transmembrane region" description="Helical" evidence="1">
    <location>
        <begin position="308"/>
        <end position="328"/>
    </location>
</feature>
<feature type="transmembrane region" description="Helical" evidence="1">
    <location>
        <begin position="347"/>
        <end position="367"/>
    </location>
</feature>
<dbReference type="EC" id="7.1.1.-" evidence="1"/>
<dbReference type="EMBL" id="CT971583">
    <property type="protein sequence ID" value="CAK24717.1"/>
    <property type="status" value="ALT_INIT"/>
    <property type="molecule type" value="Genomic_DNA"/>
</dbReference>
<dbReference type="SMR" id="A5GP52"/>
<dbReference type="STRING" id="32051.SynWH7803_2291"/>
<dbReference type="KEGG" id="syx:SynWH7803_2291"/>
<dbReference type="eggNOG" id="COG1005">
    <property type="taxonomic scope" value="Bacteria"/>
</dbReference>
<dbReference type="HOGENOM" id="CLU_015134_0_1_3"/>
<dbReference type="Proteomes" id="UP000001566">
    <property type="component" value="Chromosome"/>
</dbReference>
<dbReference type="GO" id="GO:0031676">
    <property type="term" value="C:plasma membrane-derived thylakoid membrane"/>
    <property type="evidence" value="ECO:0007669"/>
    <property type="project" value="UniProtKB-SubCell"/>
</dbReference>
<dbReference type="GO" id="GO:0003954">
    <property type="term" value="F:NADH dehydrogenase activity"/>
    <property type="evidence" value="ECO:0007669"/>
    <property type="project" value="TreeGrafter"/>
</dbReference>
<dbReference type="GO" id="GO:0016655">
    <property type="term" value="F:oxidoreductase activity, acting on NAD(P)H, quinone or similar compound as acceptor"/>
    <property type="evidence" value="ECO:0007669"/>
    <property type="project" value="UniProtKB-UniRule"/>
</dbReference>
<dbReference type="GO" id="GO:0048038">
    <property type="term" value="F:quinone binding"/>
    <property type="evidence" value="ECO:0007669"/>
    <property type="project" value="UniProtKB-KW"/>
</dbReference>
<dbReference type="GO" id="GO:0009060">
    <property type="term" value="P:aerobic respiration"/>
    <property type="evidence" value="ECO:0007669"/>
    <property type="project" value="TreeGrafter"/>
</dbReference>
<dbReference type="GO" id="GO:0019684">
    <property type="term" value="P:photosynthesis, light reaction"/>
    <property type="evidence" value="ECO:0007669"/>
    <property type="project" value="UniProtKB-UniRule"/>
</dbReference>
<dbReference type="HAMAP" id="MF_01350">
    <property type="entry name" value="NDH1_NuoH"/>
    <property type="match status" value="1"/>
</dbReference>
<dbReference type="InterPro" id="IPR001694">
    <property type="entry name" value="NADH_UbQ_OxRdtase_su1/FPO"/>
</dbReference>
<dbReference type="InterPro" id="IPR018086">
    <property type="entry name" value="NADH_UbQ_OxRdtase_su1_CS"/>
</dbReference>
<dbReference type="NCBIfam" id="NF004741">
    <property type="entry name" value="PRK06076.1-2"/>
    <property type="match status" value="1"/>
</dbReference>
<dbReference type="NCBIfam" id="NF004744">
    <property type="entry name" value="PRK06076.1-5"/>
    <property type="match status" value="1"/>
</dbReference>
<dbReference type="PANTHER" id="PTHR11432">
    <property type="entry name" value="NADH DEHYDROGENASE SUBUNIT 1"/>
    <property type="match status" value="1"/>
</dbReference>
<dbReference type="PANTHER" id="PTHR11432:SF3">
    <property type="entry name" value="NADH-UBIQUINONE OXIDOREDUCTASE CHAIN 1"/>
    <property type="match status" value="1"/>
</dbReference>
<dbReference type="Pfam" id="PF00146">
    <property type="entry name" value="NADHdh"/>
    <property type="match status" value="1"/>
</dbReference>
<dbReference type="PROSITE" id="PS00667">
    <property type="entry name" value="COMPLEX1_ND1_1"/>
    <property type="match status" value="1"/>
</dbReference>
<dbReference type="PROSITE" id="PS00668">
    <property type="entry name" value="COMPLEX1_ND1_2"/>
    <property type="match status" value="1"/>
</dbReference>
<keyword id="KW-0472">Membrane</keyword>
<keyword id="KW-0520">NAD</keyword>
<keyword id="KW-0521">NADP</keyword>
<keyword id="KW-0618">Plastoquinone</keyword>
<keyword id="KW-0874">Quinone</keyword>
<keyword id="KW-1185">Reference proteome</keyword>
<keyword id="KW-0793">Thylakoid</keyword>
<keyword id="KW-1278">Translocase</keyword>
<keyword id="KW-0812">Transmembrane</keyword>
<keyword id="KW-1133">Transmembrane helix</keyword>
<protein>
    <recommendedName>
        <fullName evidence="1">NAD(P)H-quinone oxidoreductase subunit 1</fullName>
        <ecNumber evidence="1">7.1.1.-</ecNumber>
    </recommendedName>
    <alternativeName>
        <fullName evidence="1">NAD(P)H dehydrogenase I subunit 1</fullName>
    </alternativeName>
    <alternativeName>
        <fullName evidence="1">NDH-1 subunit 1</fullName>
    </alternativeName>
    <alternativeName>
        <fullName evidence="1">NDH-A</fullName>
    </alternativeName>
</protein>
<gene>
    <name evidence="1" type="primary">ndhA</name>
    <name type="ordered locus">SynWH7803_2291</name>
</gene>
<name>NU1C_SYNPW</name>